<organism>
    <name type="scientific">Bradyrhizobium diazoefficiens (strain JCM 10833 / BCRC 13528 / IAM 13628 / NBRC 14792 / USDA 110)</name>
    <dbReference type="NCBI Taxonomy" id="224911"/>
    <lineage>
        <taxon>Bacteria</taxon>
        <taxon>Pseudomonadati</taxon>
        <taxon>Pseudomonadota</taxon>
        <taxon>Alphaproteobacteria</taxon>
        <taxon>Hyphomicrobiales</taxon>
        <taxon>Nitrobacteraceae</taxon>
        <taxon>Bradyrhizobium</taxon>
    </lineage>
</organism>
<feature type="chain" id="PRO_0000160324" description="ATP-dependent Clp protease ATP-binding subunit ClpX">
    <location>
        <begin position="1"/>
        <end position="423"/>
    </location>
</feature>
<feature type="domain" description="ClpX-type ZB" evidence="2">
    <location>
        <begin position="3"/>
        <end position="56"/>
    </location>
</feature>
<feature type="binding site" evidence="2">
    <location>
        <position position="15"/>
    </location>
    <ligand>
        <name>Zn(2+)</name>
        <dbReference type="ChEBI" id="CHEBI:29105"/>
    </ligand>
</feature>
<feature type="binding site" evidence="2">
    <location>
        <position position="18"/>
    </location>
    <ligand>
        <name>Zn(2+)</name>
        <dbReference type="ChEBI" id="CHEBI:29105"/>
    </ligand>
</feature>
<feature type="binding site" evidence="2">
    <location>
        <position position="37"/>
    </location>
    <ligand>
        <name>Zn(2+)</name>
        <dbReference type="ChEBI" id="CHEBI:29105"/>
    </ligand>
</feature>
<feature type="binding site" evidence="2">
    <location>
        <position position="40"/>
    </location>
    <ligand>
        <name>Zn(2+)</name>
        <dbReference type="ChEBI" id="CHEBI:29105"/>
    </ligand>
</feature>
<feature type="binding site" evidence="1">
    <location>
        <begin position="119"/>
        <end position="126"/>
    </location>
    <ligand>
        <name>ATP</name>
        <dbReference type="ChEBI" id="CHEBI:30616"/>
    </ligand>
</feature>
<comment type="function">
    <text evidence="1">ATP-dependent specificity component of the Clp protease. It directs the protease to specific substrates. Can perform chaperone functions in the absence of ClpP.</text>
</comment>
<comment type="subunit">
    <text evidence="1">Component of the ClpX-ClpP complex. Forms a hexameric ring that, in the presence of ATP, binds to fourteen ClpP subunits assembled into a disk-like structure with a central cavity, resembling the structure of eukaryotic proteasomes.</text>
</comment>
<comment type="similarity">
    <text evidence="1">Belongs to the ClpX chaperone family.</text>
</comment>
<dbReference type="EMBL" id="BA000040">
    <property type="protein sequence ID" value="BAC50208.1"/>
    <property type="molecule type" value="Genomic_DNA"/>
</dbReference>
<dbReference type="RefSeq" id="NP_771583.1">
    <property type="nucleotide sequence ID" value="NC_004463.1"/>
</dbReference>
<dbReference type="RefSeq" id="WP_008547851.1">
    <property type="nucleotide sequence ID" value="NZ_CP011360.1"/>
</dbReference>
<dbReference type="SMR" id="Q89KG2"/>
<dbReference type="FunCoup" id="Q89KG2">
    <property type="interactions" value="559"/>
</dbReference>
<dbReference type="STRING" id="224911.AAV28_22065"/>
<dbReference type="EnsemblBacteria" id="BAC50208">
    <property type="protein sequence ID" value="BAC50208"/>
    <property type="gene ID" value="BAC50208"/>
</dbReference>
<dbReference type="GeneID" id="93211269"/>
<dbReference type="KEGG" id="bja:bll4943"/>
<dbReference type="PATRIC" id="fig|224911.44.peg.4797"/>
<dbReference type="eggNOG" id="COG1219">
    <property type="taxonomic scope" value="Bacteria"/>
</dbReference>
<dbReference type="HOGENOM" id="CLU_014218_8_2_5"/>
<dbReference type="InParanoid" id="Q89KG2"/>
<dbReference type="OrthoDB" id="9804062at2"/>
<dbReference type="PhylomeDB" id="Q89KG2"/>
<dbReference type="PRO" id="PR:Q89KG2"/>
<dbReference type="Proteomes" id="UP000002526">
    <property type="component" value="Chromosome"/>
</dbReference>
<dbReference type="GO" id="GO:0009376">
    <property type="term" value="C:HslUV protease complex"/>
    <property type="evidence" value="ECO:0000318"/>
    <property type="project" value="GO_Central"/>
</dbReference>
<dbReference type="GO" id="GO:0005524">
    <property type="term" value="F:ATP binding"/>
    <property type="evidence" value="ECO:0000318"/>
    <property type="project" value="GO_Central"/>
</dbReference>
<dbReference type="GO" id="GO:0016887">
    <property type="term" value="F:ATP hydrolysis activity"/>
    <property type="evidence" value="ECO:0000318"/>
    <property type="project" value="GO_Central"/>
</dbReference>
<dbReference type="GO" id="GO:0140662">
    <property type="term" value="F:ATP-dependent protein folding chaperone"/>
    <property type="evidence" value="ECO:0007669"/>
    <property type="project" value="InterPro"/>
</dbReference>
<dbReference type="GO" id="GO:0046983">
    <property type="term" value="F:protein dimerization activity"/>
    <property type="evidence" value="ECO:0007669"/>
    <property type="project" value="InterPro"/>
</dbReference>
<dbReference type="GO" id="GO:0051082">
    <property type="term" value="F:unfolded protein binding"/>
    <property type="evidence" value="ECO:0007669"/>
    <property type="project" value="UniProtKB-UniRule"/>
</dbReference>
<dbReference type="GO" id="GO:0008270">
    <property type="term" value="F:zinc ion binding"/>
    <property type="evidence" value="ECO:0007669"/>
    <property type="project" value="InterPro"/>
</dbReference>
<dbReference type="GO" id="GO:0051301">
    <property type="term" value="P:cell division"/>
    <property type="evidence" value="ECO:0000318"/>
    <property type="project" value="GO_Central"/>
</dbReference>
<dbReference type="GO" id="GO:0051603">
    <property type="term" value="P:proteolysis involved in protein catabolic process"/>
    <property type="evidence" value="ECO:0000318"/>
    <property type="project" value="GO_Central"/>
</dbReference>
<dbReference type="CDD" id="cd19497">
    <property type="entry name" value="RecA-like_ClpX"/>
    <property type="match status" value="1"/>
</dbReference>
<dbReference type="FunFam" id="1.10.8.60:FF:000002">
    <property type="entry name" value="ATP-dependent Clp protease ATP-binding subunit ClpX"/>
    <property type="match status" value="1"/>
</dbReference>
<dbReference type="FunFam" id="3.40.50.300:FF:000005">
    <property type="entry name" value="ATP-dependent Clp protease ATP-binding subunit ClpX"/>
    <property type="match status" value="1"/>
</dbReference>
<dbReference type="Gene3D" id="1.10.8.60">
    <property type="match status" value="1"/>
</dbReference>
<dbReference type="Gene3D" id="6.20.220.10">
    <property type="entry name" value="ClpX chaperone, C4-type zinc finger domain"/>
    <property type="match status" value="1"/>
</dbReference>
<dbReference type="Gene3D" id="3.40.50.300">
    <property type="entry name" value="P-loop containing nucleotide triphosphate hydrolases"/>
    <property type="match status" value="1"/>
</dbReference>
<dbReference type="HAMAP" id="MF_00175">
    <property type="entry name" value="ClpX"/>
    <property type="match status" value="1"/>
</dbReference>
<dbReference type="InterPro" id="IPR003593">
    <property type="entry name" value="AAA+_ATPase"/>
</dbReference>
<dbReference type="InterPro" id="IPR050052">
    <property type="entry name" value="ATP-dep_Clp_protease_ClpX"/>
</dbReference>
<dbReference type="InterPro" id="IPR003959">
    <property type="entry name" value="ATPase_AAA_core"/>
</dbReference>
<dbReference type="InterPro" id="IPR019489">
    <property type="entry name" value="Clp_ATPase_C"/>
</dbReference>
<dbReference type="InterPro" id="IPR004487">
    <property type="entry name" value="Clp_protease_ATP-bd_su_ClpX"/>
</dbReference>
<dbReference type="InterPro" id="IPR046425">
    <property type="entry name" value="ClpX_bact"/>
</dbReference>
<dbReference type="InterPro" id="IPR027417">
    <property type="entry name" value="P-loop_NTPase"/>
</dbReference>
<dbReference type="InterPro" id="IPR010603">
    <property type="entry name" value="Znf_CppX_C4"/>
</dbReference>
<dbReference type="InterPro" id="IPR038366">
    <property type="entry name" value="Znf_CppX_C4_sf"/>
</dbReference>
<dbReference type="NCBIfam" id="TIGR00382">
    <property type="entry name" value="clpX"/>
    <property type="match status" value="1"/>
</dbReference>
<dbReference type="NCBIfam" id="NF003745">
    <property type="entry name" value="PRK05342.1"/>
    <property type="match status" value="1"/>
</dbReference>
<dbReference type="PANTHER" id="PTHR48102:SF7">
    <property type="entry name" value="ATP-DEPENDENT CLP PROTEASE ATP-BINDING SUBUNIT CLPX-LIKE, MITOCHONDRIAL"/>
    <property type="match status" value="1"/>
</dbReference>
<dbReference type="PANTHER" id="PTHR48102">
    <property type="entry name" value="ATP-DEPENDENT CLP PROTEASE ATP-BINDING SUBUNIT CLPX-LIKE, MITOCHONDRIAL-RELATED"/>
    <property type="match status" value="1"/>
</dbReference>
<dbReference type="Pfam" id="PF07724">
    <property type="entry name" value="AAA_2"/>
    <property type="match status" value="1"/>
</dbReference>
<dbReference type="Pfam" id="PF10431">
    <property type="entry name" value="ClpB_D2-small"/>
    <property type="match status" value="1"/>
</dbReference>
<dbReference type="Pfam" id="PF06689">
    <property type="entry name" value="zf-C4_ClpX"/>
    <property type="match status" value="1"/>
</dbReference>
<dbReference type="SMART" id="SM00382">
    <property type="entry name" value="AAA"/>
    <property type="match status" value="1"/>
</dbReference>
<dbReference type="SMART" id="SM01086">
    <property type="entry name" value="ClpB_D2-small"/>
    <property type="match status" value="1"/>
</dbReference>
<dbReference type="SMART" id="SM00994">
    <property type="entry name" value="zf-C4_ClpX"/>
    <property type="match status" value="1"/>
</dbReference>
<dbReference type="SUPFAM" id="SSF57716">
    <property type="entry name" value="Glucocorticoid receptor-like (DNA-binding domain)"/>
    <property type="match status" value="1"/>
</dbReference>
<dbReference type="SUPFAM" id="SSF52540">
    <property type="entry name" value="P-loop containing nucleoside triphosphate hydrolases"/>
    <property type="match status" value="1"/>
</dbReference>
<dbReference type="PROSITE" id="PS51902">
    <property type="entry name" value="CLPX_ZB"/>
    <property type="match status" value="1"/>
</dbReference>
<protein>
    <recommendedName>
        <fullName evidence="1">ATP-dependent Clp protease ATP-binding subunit ClpX</fullName>
    </recommendedName>
</protein>
<accession>Q89KG2</accession>
<sequence>MSKVGTSDSKNTLYCSFCGKSQHEVRKLIAGPTVFICDECVELCMDIIREENKSSLVKSRDGIPTPKEICKVLDDYVIGQSHAKKVLSVAVHNHYKRLNHQTKHNDVELAKSNILLIGPTGSGKTLLAQTLARILDVPFTMADATTLTEAGYVGEDVENIILKLLQAADYNVERAQRGIVYIDEIDKISRKSDNPSITRDVSGEGVQQALLKIMEGTVASVPPQGGRKHPQQEFLQVDTTNILFICGGAFAGLEKIISARGRSTSIGFGAQVLAPEDRRTGEIFRHVEPEDLLKYGLIPEFVGRLPVVATLEDLDETSLKKILTEPKNALVKQYQRLFEMENIELTFADEALGAVARKAIERKTGARGLRSILEAILLETMFDLPGLEGVEEVVISREVVEGTARPLYIYADRSDRAVENASA</sequence>
<reference key="1">
    <citation type="journal article" date="2002" name="DNA Res.">
        <title>Complete genomic sequence of nitrogen-fixing symbiotic bacterium Bradyrhizobium japonicum USDA110.</title>
        <authorList>
            <person name="Kaneko T."/>
            <person name="Nakamura Y."/>
            <person name="Sato S."/>
            <person name="Minamisawa K."/>
            <person name="Uchiumi T."/>
            <person name="Sasamoto S."/>
            <person name="Watanabe A."/>
            <person name="Idesawa K."/>
            <person name="Iriguchi M."/>
            <person name="Kawashima K."/>
            <person name="Kohara M."/>
            <person name="Matsumoto M."/>
            <person name="Shimpo S."/>
            <person name="Tsuruoka H."/>
            <person name="Wada T."/>
            <person name="Yamada M."/>
            <person name="Tabata S."/>
        </authorList>
    </citation>
    <scope>NUCLEOTIDE SEQUENCE [LARGE SCALE GENOMIC DNA]</scope>
    <source>
        <strain>JCM 10833 / BCRC 13528 / IAM 13628 / NBRC 14792 / USDA 110</strain>
    </source>
</reference>
<proteinExistence type="inferred from homology"/>
<gene>
    <name evidence="1" type="primary">clpX</name>
    <name type="ordered locus">bll4943</name>
</gene>
<keyword id="KW-0067">ATP-binding</keyword>
<keyword id="KW-0143">Chaperone</keyword>
<keyword id="KW-0479">Metal-binding</keyword>
<keyword id="KW-0547">Nucleotide-binding</keyword>
<keyword id="KW-1185">Reference proteome</keyword>
<keyword id="KW-0862">Zinc</keyword>
<evidence type="ECO:0000255" key="1">
    <source>
        <dbReference type="HAMAP-Rule" id="MF_00175"/>
    </source>
</evidence>
<evidence type="ECO:0000255" key="2">
    <source>
        <dbReference type="PROSITE-ProRule" id="PRU01250"/>
    </source>
</evidence>
<name>CLPX_BRADU</name>